<dbReference type="PIR" id="B61589">
    <property type="entry name" value="B61589"/>
</dbReference>
<dbReference type="SMR" id="P52253"/>
<dbReference type="GO" id="GO:0005576">
    <property type="term" value="C:extracellular region"/>
    <property type="evidence" value="ECO:0007669"/>
    <property type="project" value="UniProtKB-SubCell"/>
</dbReference>
<dbReference type="GO" id="GO:0004867">
    <property type="term" value="F:serine-type endopeptidase inhibitor activity"/>
    <property type="evidence" value="ECO:0007669"/>
    <property type="project" value="UniProtKB-KW"/>
</dbReference>
<dbReference type="CDD" id="cd00104">
    <property type="entry name" value="KAZAL_FS"/>
    <property type="match status" value="1"/>
</dbReference>
<dbReference type="FunFam" id="3.30.60.30:FF:000037">
    <property type="entry name" value="Ovomucoid"/>
    <property type="match status" value="1"/>
</dbReference>
<dbReference type="Gene3D" id="3.30.60.30">
    <property type="match status" value="1"/>
</dbReference>
<dbReference type="InterPro" id="IPR050159">
    <property type="entry name" value="Kazal-type_SerProtInhib"/>
</dbReference>
<dbReference type="InterPro" id="IPR002350">
    <property type="entry name" value="Kazal_dom"/>
</dbReference>
<dbReference type="InterPro" id="IPR036058">
    <property type="entry name" value="Kazal_dom_sf"/>
</dbReference>
<dbReference type="PANTHER" id="PTHR47499:SF1">
    <property type="entry name" value="SERINE PROTEASE INHIBITOR KAZAL-TYPE 7"/>
    <property type="match status" value="1"/>
</dbReference>
<dbReference type="PANTHER" id="PTHR47499">
    <property type="entry name" value="SERINE PROTEASE INHIBITOR KAZAL-TYPE 7 SPINK7"/>
    <property type="match status" value="1"/>
</dbReference>
<dbReference type="Pfam" id="PF00050">
    <property type="entry name" value="Kazal_1"/>
    <property type="match status" value="1"/>
</dbReference>
<dbReference type="SMART" id="SM00280">
    <property type="entry name" value="KAZAL"/>
    <property type="match status" value="1"/>
</dbReference>
<dbReference type="SUPFAM" id="SSF100895">
    <property type="entry name" value="Kazal-type serine protease inhibitors"/>
    <property type="match status" value="1"/>
</dbReference>
<dbReference type="PROSITE" id="PS00282">
    <property type="entry name" value="KAZAL_1"/>
    <property type="match status" value="1"/>
</dbReference>
<dbReference type="PROSITE" id="PS51465">
    <property type="entry name" value="KAZAL_2"/>
    <property type="match status" value="1"/>
</dbReference>
<accession>P52253</accession>
<organism>
    <name type="scientific">Scythrops novaehollandiae</name>
    <name type="common">Channel-billed cuckoo</name>
    <dbReference type="NCBI Taxonomy" id="30394"/>
    <lineage>
        <taxon>Eukaryota</taxon>
        <taxon>Metazoa</taxon>
        <taxon>Chordata</taxon>
        <taxon>Craniata</taxon>
        <taxon>Vertebrata</taxon>
        <taxon>Euteleostomi</taxon>
        <taxon>Archelosauria</taxon>
        <taxon>Archosauria</taxon>
        <taxon>Dinosauria</taxon>
        <taxon>Saurischia</taxon>
        <taxon>Theropoda</taxon>
        <taxon>Coelurosauria</taxon>
        <taxon>Aves</taxon>
        <taxon>Neognathae</taxon>
        <taxon>Neoaves</taxon>
        <taxon>Otidimorphae</taxon>
        <taxon>Cuculiformes</taxon>
        <taxon>Cuculidae</taxon>
        <taxon>Scythrops</taxon>
    </lineage>
</organism>
<evidence type="ECO:0000255" key="1">
    <source>
        <dbReference type="PROSITE-ProRule" id="PRU00798"/>
    </source>
</evidence>
<protein>
    <recommendedName>
        <fullName>Ovomucoid</fullName>
    </recommendedName>
</protein>
<comment type="subcellular location">
    <subcellularLocation>
        <location>Secreted</location>
    </subcellularLocation>
</comment>
<comment type="domain">
    <text>Avian ovomucoid consists of three homologous, tandem Kazal family inhibitory domains.</text>
</comment>
<name>IOVO_SCYNO</name>
<keyword id="KW-0903">Direct protein sequencing</keyword>
<keyword id="KW-1015">Disulfide bond</keyword>
<keyword id="KW-0325">Glycoprotein</keyword>
<keyword id="KW-0646">Protease inhibitor</keyword>
<keyword id="KW-0677">Repeat</keyword>
<keyword id="KW-0964">Secreted</keyword>
<keyword id="KW-0722">Serine protease inhibitor</keyword>
<sequence length="52" mass="5621">TVDCSDYPKPVCTLEEMPLCGSDNKTYGNKCNFCNAVVDSNGTLTLSHFGKC</sequence>
<proteinExistence type="evidence at protein level"/>
<feature type="chain" id="PRO_0000073177" description="Ovomucoid">
    <location>
        <begin position="1" status="less than"/>
        <end position="52" status="greater than"/>
    </location>
</feature>
<feature type="domain" description="Kazal-like" evidence="1">
    <location>
        <begin position="2"/>
        <end position="52"/>
    </location>
</feature>
<feature type="site" description="Reactive bond 3">
    <location>
        <begin position="14"/>
        <end position="15"/>
    </location>
</feature>
<feature type="glycosylation site" description="N-linked (GlcNAc...) asparagine">
    <location>
        <position position="41"/>
    </location>
</feature>
<feature type="disulfide bond">
    <location>
        <begin position="4"/>
        <end position="34"/>
    </location>
</feature>
<feature type="disulfide bond">
    <location>
        <begin position="12"/>
        <end position="31"/>
    </location>
</feature>
<feature type="disulfide bond">
    <location>
        <begin position="20"/>
        <end position="52"/>
    </location>
</feature>
<feature type="non-terminal residue">
    <location>
        <position position="1"/>
    </location>
</feature>
<feature type="non-terminal residue">
    <location>
        <position position="52"/>
    </location>
</feature>
<reference key="1">
    <citation type="journal article" date="1993" name="J. Protein Chem.">
        <title>Amino acid sequences of ovomucoid third domains from 27 additional species of birds.</title>
        <authorList>
            <person name="Apostol I."/>
            <person name="Giletto A."/>
            <person name="Komiyama T."/>
            <person name="Zhang W."/>
            <person name="Laskowski M. Jr."/>
        </authorList>
    </citation>
    <scope>PROTEIN SEQUENCE</scope>
</reference>